<name>GPDA_DEIGD</name>
<gene>
    <name evidence="1" type="primary">gpsA</name>
    <name type="ordered locus">Dgeo_2043</name>
</gene>
<feature type="chain" id="PRO_0000255305" description="Glycerol-3-phosphate dehydrogenase [NAD(P)+]">
    <location>
        <begin position="1"/>
        <end position="326"/>
    </location>
</feature>
<feature type="active site" description="Proton acceptor" evidence="1">
    <location>
        <position position="187"/>
    </location>
</feature>
<feature type="binding site" evidence="1">
    <location>
        <position position="16"/>
    </location>
    <ligand>
        <name>NADPH</name>
        <dbReference type="ChEBI" id="CHEBI:57783"/>
    </ligand>
</feature>
<feature type="binding site" evidence="1">
    <location>
        <position position="36"/>
    </location>
    <ligand>
        <name>NADPH</name>
        <dbReference type="ChEBI" id="CHEBI:57783"/>
    </ligand>
</feature>
<feature type="binding site" evidence="1">
    <location>
        <position position="37"/>
    </location>
    <ligand>
        <name>NADPH</name>
        <dbReference type="ChEBI" id="CHEBI:57783"/>
    </ligand>
</feature>
<feature type="binding site" evidence="1">
    <location>
        <position position="106"/>
    </location>
    <ligand>
        <name>NADPH</name>
        <dbReference type="ChEBI" id="CHEBI:57783"/>
    </ligand>
</feature>
<feature type="binding site" evidence="1">
    <location>
        <position position="106"/>
    </location>
    <ligand>
        <name>sn-glycerol 3-phosphate</name>
        <dbReference type="ChEBI" id="CHEBI:57597"/>
    </ligand>
</feature>
<feature type="binding site" evidence="1">
    <location>
        <position position="132"/>
    </location>
    <ligand>
        <name>sn-glycerol 3-phosphate</name>
        <dbReference type="ChEBI" id="CHEBI:57597"/>
    </ligand>
</feature>
<feature type="binding site" evidence="1">
    <location>
        <position position="136"/>
    </location>
    <ligand>
        <name>NADPH</name>
        <dbReference type="ChEBI" id="CHEBI:57783"/>
    </ligand>
</feature>
<feature type="binding site" evidence="1">
    <location>
        <position position="187"/>
    </location>
    <ligand>
        <name>sn-glycerol 3-phosphate</name>
        <dbReference type="ChEBI" id="CHEBI:57597"/>
    </ligand>
</feature>
<feature type="binding site" evidence="1">
    <location>
        <position position="240"/>
    </location>
    <ligand>
        <name>sn-glycerol 3-phosphate</name>
        <dbReference type="ChEBI" id="CHEBI:57597"/>
    </ligand>
</feature>
<feature type="binding site" evidence="1">
    <location>
        <position position="250"/>
    </location>
    <ligand>
        <name>sn-glycerol 3-phosphate</name>
        <dbReference type="ChEBI" id="CHEBI:57597"/>
    </ligand>
</feature>
<feature type="binding site" evidence="1">
    <location>
        <position position="251"/>
    </location>
    <ligand>
        <name>NADPH</name>
        <dbReference type="ChEBI" id="CHEBI:57783"/>
    </ligand>
</feature>
<feature type="binding site" evidence="1">
    <location>
        <position position="251"/>
    </location>
    <ligand>
        <name>sn-glycerol 3-phosphate</name>
        <dbReference type="ChEBI" id="CHEBI:57597"/>
    </ligand>
</feature>
<feature type="binding site" evidence="1">
    <location>
        <position position="252"/>
    </location>
    <ligand>
        <name>sn-glycerol 3-phosphate</name>
        <dbReference type="ChEBI" id="CHEBI:57597"/>
    </ligand>
</feature>
<feature type="binding site" evidence="1">
    <location>
        <position position="271"/>
    </location>
    <ligand>
        <name>NADPH</name>
        <dbReference type="ChEBI" id="CHEBI:57783"/>
    </ligand>
</feature>
<feature type="binding site" evidence="1">
    <location>
        <position position="273"/>
    </location>
    <ligand>
        <name>NADPH</name>
        <dbReference type="ChEBI" id="CHEBI:57783"/>
    </ligand>
</feature>
<reference key="1">
    <citation type="submission" date="2006-04" db="EMBL/GenBank/DDBJ databases">
        <title>Complete sequence of chromosome of Deinococcus geothermalis DSM 11300.</title>
        <authorList>
            <person name="Copeland A."/>
            <person name="Lucas S."/>
            <person name="Lapidus A."/>
            <person name="Barry K."/>
            <person name="Detter J.C."/>
            <person name="Glavina del Rio T."/>
            <person name="Hammon N."/>
            <person name="Israni S."/>
            <person name="Dalin E."/>
            <person name="Tice H."/>
            <person name="Pitluck S."/>
            <person name="Brettin T."/>
            <person name="Bruce D."/>
            <person name="Han C."/>
            <person name="Tapia R."/>
            <person name="Saunders E."/>
            <person name="Gilna P."/>
            <person name="Schmutz J."/>
            <person name="Larimer F."/>
            <person name="Land M."/>
            <person name="Hauser L."/>
            <person name="Kyrpides N."/>
            <person name="Kim E."/>
            <person name="Daly M.J."/>
            <person name="Fredrickson J.K."/>
            <person name="Makarova K.S."/>
            <person name="Gaidamakova E.K."/>
            <person name="Zhai M."/>
            <person name="Richardson P."/>
        </authorList>
    </citation>
    <scope>NUCLEOTIDE SEQUENCE [LARGE SCALE GENOMIC DNA]</scope>
    <source>
        <strain>DSM 11300 / CIP 105573 / AG-3a</strain>
    </source>
</reference>
<proteinExistence type="inferred from homology"/>
<organism>
    <name type="scientific">Deinococcus geothermalis (strain DSM 11300 / CIP 105573 / AG-3a)</name>
    <dbReference type="NCBI Taxonomy" id="319795"/>
    <lineage>
        <taxon>Bacteria</taxon>
        <taxon>Thermotogati</taxon>
        <taxon>Deinococcota</taxon>
        <taxon>Deinococci</taxon>
        <taxon>Deinococcales</taxon>
        <taxon>Deinococcaceae</taxon>
        <taxon>Deinococcus</taxon>
    </lineage>
</organism>
<evidence type="ECO:0000255" key="1">
    <source>
        <dbReference type="HAMAP-Rule" id="MF_00394"/>
    </source>
</evidence>
<keyword id="KW-0963">Cytoplasm</keyword>
<keyword id="KW-0444">Lipid biosynthesis</keyword>
<keyword id="KW-0443">Lipid metabolism</keyword>
<keyword id="KW-0520">NAD</keyword>
<keyword id="KW-0521">NADP</keyword>
<keyword id="KW-0547">Nucleotide-binding</keyword>
<keyword id="KW-0560">Oxidoreductase</keyword>
<keyword id="KW-0594">Phospholipid biosynthesis</keyword>
<keyword id="KW-1208">Phospholipid metabolism</keyword>
<sequence>MSLGGGNVPVLGAGGWGTALAVAVTRAGHRATLWARRPDFAARLASERENGEYLPGVLLPAEVSVTSDLTHAVAGADFALVVVPSVGVPDLLAALPRDLGIVLCAKGLAPDGGRLTDLARSLGFARVAVLSGPNHAEEVGRGLPAATVVASADLELAGKVQATLISPTLRVYTSADEVGVELGGVLKNVIALATGLVDGLKLGDNAKAALITRGLREMGRYLVSQGAHEDTVYGLSGLGDLVATATSRHSRNRAAGEAIARGEHPQQGGKVVEGLRTAGLLDAWASAHGHDLPIVHAVAKVASGEWTPDVGIRSLMGRGAKSELEE</sequence>
<comment type="function">
    <text evidence="1">Catalyzes the reduction of the glycolytic intermediate dihydroxyacetone phosphate (DHAP) to sn-glycerol 3-phosphate (G3P), the key precursor for phospholipid synthesis.</text>
</comment>
<comment type="catalytic activity">
    <reaction evidence="1">
        <text>sn-glycerol 3-phosphate + NAD(+) = dihydroxyacetone phosphate + NADH + H(+)</text>
        <dbReference type="Rhea" id="RHEA:11092"/>
        <dbReference type="ChEBI" id="CHEBI:15378"/>
        <dbReference type="ChEBI" id="CHEBI:57540"/>
        <dbReference type="ChEBI" id="CHEBI:57597"/>
        <dbReference type="ChEBI" id="CHEBI:57642"/>
        <dbReference type="ChEBI" id="CHEBI:57945"/>
        <dbReference type="EC" id="1.1.1.94"/>
    </reaction>
    <physiologicalReaction direction="right-to-left" evidence="1">
        <dbReference type="Rhea" id="RHEA:11094"/>
    </physiologicalReaction>
</comment>
<comment type="catalytic activity">
    <reaction evidence="1">
        <text>sn-glycerol 3-phosphate + NADP(+) = dihydroxyacetone phosphate + NADPH + H(+)</text>
        <dbReference type="Rhea" id="RHEA:11096"/>
        <dbReference type="ChEBI" id="CHEBI:15378"/>
        <dbReference type="ChEBI" id="CHEBI:57597"/>
        <dbReference type="ChEBI" id="CHEBI:57642"/>
        <dbReference type="ChEBI" id="CHEBI:57783"/>
        <dbReference type="ChEBI" id="CHEBI:58349"/>
        <dbReference type="EC" id="1.1.1.94"/>
    </reaction>
    <physiologicalReaction direction="right-to-left" evidence="1">
        <dbReference type="Rhea" id="RHEA:11098"/>
    </physiologicalReaction>
</comment>
<comment type="pathway">
    <text evidence="1">Membrane lipid metabolism; glycerophospholipid metabolism.</text>
</comment>
<comment type="subcellular location">
    <subcellularLocation>
        <location evidence="1">Cytoplasm</location>
    </subcellularLocation>
</comment>
<comment type="similarity">
    <text evidence="1">Belongs to the NAD-dependent glycerol-3-phosphate dehydrogenase family.</text>
</comment>
<accession>Q1IWP7</accession>
<dbReference type="EC" id="1.1.1.94" evidence="1"/>
<dbReference type="EMBL" id="CP000359">
    <property type="protein sequence ID" value="ABF46337.1"/>
    <property type="molecule type" value="Genomic_DNA"/>
</dbReference>
<dbReference type="SMR" id="Q1IWP7"/>
<dbReference type="STRING" id="319795.Dgeo_2043"/>
<dbReference type="KEGG" id="dge:Dgeo_2043"/>
<dbReference type="eggNOG" id="COG0240">
    <property type="taxonomic scope" value="Bacteria"/>
</dbReference>
<dbReference type="HOGENOM" id="CLU_033449_0_2_0"/>
<dbReference type="UniPathway" id="UPA00940"/>
<dbReference type="Proteomes" id="UP000002431">
    <property type="component" value="Chromosome"/>
</dbReference>
<dbReference type="GO" id="GO:0005829">
    <property type="term" value="C:cytosol"/>
    <property type="evidence" value="ECO:0007669"/>
    <property type="project" value="TreeGrafter"/>
</dbReference>
<dbReference type="GO" id="GO:0047952">
    <property type="term" value="F:glycerol-3-phosphate dehydrogenase [NAD(P)+] activity"/>
    <property type="evidence" value="ECO:0007669"/>
    <property type="project" value="UniProtKB-UniRule"/>
</dbReference>
<dbReference type="GO" id="GO:0051287">
    <property type="term" value="F:NAD binding"/>
    <property type="evidence" value="ECO:0007669"/>
    <property type="project" value="InterPro"/>
</dbReference>
<dbReference type="GO" id="GO:0005975">
    <property type="term" value="P:carbohydrate metabolic process"/>
    <property type="evidence" value="ECO:0007669"/>
    <property type="project" value="InterPro"/>
</dbReference>
<dbReference type="GO" id="GO:0046167">
    <property type="term" value="P:glycerol-3-phosphate biosynthetic process"/>
    <property type="evidence" value="ECO:0007669"/>
    <property type="project" value="UniProtKB-UniRule"/>
</dbReference>
<dbReference type="GO" id="GO:0046168">
    <property type="term" value="P:glycerol-3-phosphate catabolic process"/>
    <property type="evidence" value="ECO:0007669"/>
    <property type="project" value="InterPro"/>
</dbReference>
<dbReference type="GO" id="GO:0006650">
    <property type="term" value="P:glycerophospholipid metabolic process"/>
    <property type="evidence" value="ECO:0007669"/>
    <property type="project" value="UniProtKB-UniRule"/>
</dbReference>
<dbReference type="GO" id="GO:0008654">
    <property type="term" value="P:phospholipid biosynthetic process"/>
    <property type="evidence" value="ECO:0007669"/>
    <property type="project" value="UniProtKB-KW"/>
</dbReference>
<dbReference type="FunFam" id="3.40.50.720:FF:000019">
    <property type="entry name" value="Glycerol-3-phosphate dehydrogenase [NAD(P)+]"/>
    <property type="match status" value="1"/>
</dbReference>
<dbReference type="Gene3D" id="1.10.1040.10">
    <property type="entry name" value="N-(1-d-carboxylethyl)-l-norvaline Dehydrogenase, domain 2"/>
    <property type="match status" value="1"/>
</dbReference>
<dbReference type="Gene3D" id="3.40.50.720">
    <property type="entry name" value="NAD(P)-binding Rossmann-like Domain"/>
    <property type="match status" value="1"/>
</dbReference>
<dbReference type="HAMAP" id="MF_00394">
    <property type="entry name" value="NAD_Glyc3P_dehydrog"/>
    <property type="match status" value="1"/>
</dbReference>
<dbReference type="InterPro" id="IPR008927">
    <property type="entry name" value="6-PGluconate_DH-like_C_sf"/>
</dbReference>
<dbReference type="InterPro" id="IPR013328">
    <property type="entry name" value="6PGD_dom2"/>
</dbReference>
<dbReference type="InterPro" id="IPR006168">
    <property type="entry name" value="G3P_DH_NAD-dep"/>
</dbReference>
<dbReference type="InterPro" id="IPR006109">
    <property type="entry name" value="G3P_DH_NAD-dep_C"/>
</dbReference>
<dbReference type="InterPro" id="IPR011128">
    <property type="entry name" value="G3P_DH_NAD-dep_N"/>
</dbReference>
<dbReference type="InterPro" id="IPR036291">
    <property type="entry name" value="NAD(P)-bd_dom_sf"/>
</dbReference>
<dbReference type="NCBIfam" id="NF000940">
    <property type="entry name" value="PRK00094.1-2"/>
    <property type="match status" value="1"/>
</dbReference>
<dbReference type="NCBIfam" id="NF000942">
    <property type="entry name" value="PRK00094.1-4"/>
    <property type="match status" value="1"/>
</dbReference>
<dbReference type="NCBIfam" id="NF011211">
    <property type="entry name" value="PRK14618.1"/>
    <property type="match status" value="1"/>
</dbReference>
<dbReference type="PANTHER" id="PTHR11728">
    <property type="entry name" value="GLYCEROL-3-PHOSPHATE DEHYDROGENASE"/>
    <property type="match status" value="1"/>
</dbReference>
<dbReference type="PANTHER" id="PTHR11728:SF1">
    <property type="entry name" value="GLYCEROL-3-PHOSPHATE DEHYDROGENASE [NAD(+)] 2, CHLOROPLASTIC"/>
    <property type="match status" value="1"/>
</dbReference>
<dbReference type="Pfam" id="PF07479">
    <property type="entry name" value="NAD_Gly3P_dh_C"/>
    <property type="match status" value="1"/>
</dbReference>
<dbReference type="Pfam" id="PF01210">
    <property type="entry name" value="NAD_Gly3P_dh_N"/>
    <property type="match status" value="1"/>
</dbReference>
<dbReference type="PIRSF" id="PIRSF000114">
    <property type="entry name" value="Glycerol-3-P_dh"/>
    <property type="match status" value="1"/>
</dbReference>
<dbReference type="PRINTS" id="PR00077">
    <property type="entry name" value="GPDHDRGNASE"/>
</dbReference>
<dbReference type="SUPFAM" id="SSF48179">
    <property type="entry name" value="6-phosphogluconate dehydrogenase C-terminal domain-like"/>
    <property type="match status" value="1"/>
</dbReference>
<dbReference type="SUPFAM" id="SSF51735">
    <property type="entry name" value="NAD(P)-binding Rossmann-fold domains"/>
    <property type="match status" value="1"/>
</dbReference>
<dbReference type="PROSITE" id="PS00957">
    <property type="entry name" value="NAD_G3PDH"/>
    <property type="match status" value="1"/>
</dbReference>
<protein>
    <recommendedName>
        <fullName evidence="1">Glycerol-3-phosphate dehydrogenase [NAD(P)+]</fullName>
        <ecNumber evidence="1">1.1.1.94</ecNumber>
    </recommendedName>
    <alternativeName>
        <fullName evidence="1">NAD(P)(+)-dependent glycerol-3-phosphate dehydrogenase</fullName>
    </alternativeName>
    <alternativeName>
        <fullName evidence="1">NAD(P)H-dependent dihydroxyacetone-phosphate reductase</fullName>
    </alternativeName>
</protein>